<protein>
    <recommendedName>
        <fullName evidence="5">Small ribosomal subunit protein uS9</fullName>
    </recommendedName>
    <alternativeName>
        <fullName>40S ribosomal protein S16</fullName>
    </alternativeName>
</protein>
<gene>
    <name evidence="7" type="primary">RPS16</name>
</gene>
<proteinExistence type="evidence at protein level"/>
<keyword id="KW-0002">3D-structure</keyword>
<keyword id="KW-0007">Acetylation</keyword>
<keyword id="KW-0963">Cytoplasm</keyword>
<keyword id="KW-0903">Direct protein sequencing</keyword>
<keyword id="KW-0539">Nucleus</keyword>
<keyword id="KW-0597">Phosphoprotein</keyword>
<keyword id="KW-1267">Proteomics identification</keyword>
<keyword id="KW-1185">Reference proteome</keyword>
<keyword id="KW-0687">Ribonucleoprotein</keyword>
<keyword id="KW-0689">Ribosomal protein</keyword>
<feature type="initiator methionine" description="Removed" evidence="3 4">
    <location>
        <position position="1"/>
    </location>
</feature>
<feature type="chain" id="PRO_0000111479" description="Small ribosomal subunit protein uS9">
    <location>
        <begin position="2"/>
        <end position="146"/>
    </location>
</feature>
<feature type="modified residue" description="Phosphoserine" evidence="12">
    <location>
        <position position="3"/>
    </location>
</feature>
<feature type="modified residue" description="N6-acetyllysine" evidence="11">
    <location>
        <position position="60"/>
    </location>
</feature>
<feature type="strand" evidence="13">
    <location>
        <begin position="9"/>
        <end position="16"/>
    </location>
</feature>
<feature type="strand" evidence="13">
    <location>
        <begin position="19"/>
        <end position="30"/>
    </location>
</feature>
<feature type="strand" evidence="13">
    <location>
        <begin position="32"/>
        <end position="34"/>
    </location>
</feature>
<feature type="helix" evidence="13">
    <location>
        <begin position="39"/>
        <end position="41"/>
    </location>
</feature>
<feature type="helix" evidence="13">
    <location>
        <begin position="45"/>
        <end position="47"/>
    </location>
</feature>
<feature type="helix" evidence="13">
    <location>
        <begin position="48"/>
        <end position="58"/>
    </location>
</feature>
<feature type="turn" evidence="13">
    <location>
        <begin position="60"/>
        <end position="65"/>
    </location>
</feature>
<feature type="strand" evidence="13">
    <location>
        <begin position="66"/>
        <end position="75"/>
    </location>
</feature>
<feature type="helix" evidence="13">
    <location>
        <begin position="77"/>
        <end position="99"/>
    </location>
</feature>
<feature type="helix" evidence="13">
    <location>
        <begin position="102"/>
        <end position="114"/>
    </location>
</feature>
<feature type="helix" evidence="13">
    <location>
        <begin position="117"/>
        <end position="119"/>
    </location>
</feature>
<feature type="strand" evidence="13">
    <location>
        <begin position="134"/>
        <end position="138"/>
    </location>
</feature>
<reference key="1">
    <citation type="journal article" date="1991" name="J. Biol. Chem.">
        <title>Molecular cloning and sequence analysis of the human ribosomal protein S16.</title>
        <authorList>
            <person name="Batra S.K."/>
            <person name="Metzgar R.S."/>
            <person name="Hollingsworth M.A."/>
        </authorList>
    </citation>
    <scope>NUCLEOTIDE SEQUENCE [MRNA]</scope>
</reference>
<reference key="2">
    <citation type="journal article" date="2002" name="Genome Res.">
        <title>The human ribosomal protein genes: sequencing and comparative analysis of 73 genes.</title>
        <authorList>
            <person name="Yoshihama M."/>
            <person name="Uechi T."/>
            <person name="Asakawa S."/>
            <person name="Kawasaki K."/>
            <person name="Kato S."/>
            <person name="Higa S."/>
            <person name="Maeda N."/>
            <person name="Minoshima S."/>
            <person name="Tanaka T."/>
            <person name="Shimizu N."/>
            <person name="Kenmochi N."/>
        </authorList>
    </citation>
    <scope>NUCLEOTIDE SEQUENCE [GENOMIC DNA]</scope>
</reference>
<reference key="3">
    <citation type="journal article" date="2004" name="Nat. Genet.">
        <title>Complete sequencing and characterization of 21,243 full-length human cDNAs.</title>
        <authorList>
            <person name="Ota T."/>
            <person name="Suzuki Y."/>
            <person name="Nishikawa T."/>
            <person name="Otsuki T."/>
            <person name="Sugiyama T."/>
            <person name="Irie R."/>
            <person name="Wakamatsu A."/>
            <person name="Hayashi K."/>
            <person name="Sato H."/>
            <person name="Nagai K."/>
            <person name="Kimura K."/>
            <person name="Makita H."/>
            <person name="Sekine M."/>
            <person name="Obayashi M."/>
            <person name="Nishi T."/>
            <person name="Shibahara T."/>
            <person name="Tanaka T."/>
            <person name="Ishii S."/>
            <person name="Yamamoto J."/>
            <person name="Saito K."/>
            <person name="Kawai Y."/>
            <person name="Isono Y."/>
            <person name="Nakamura Y."/>
            <person name="Nagahari K."/>
            <person name="Murakami K."/>
            <person name="Yasuda T."/>
            <person name="Iwayanagi T."/>
            <person name="Wagatsuma M."/>
            <person name="Shiratori A."/>
            <person name="Sudo H."/>
            <person name="Hosoiri T."/>
            <person name="Kaku Y."/>
            <person name="Kodaira H."/>
            <person name="Kondo H."/>
            <person name="Sugawara M."/>
            <person name="Takahashi M."/>
            <person name="Kanda K."/>
            <person name="Yokoi T."/>
            <person name="Furuya T."/>
            <person name="Kikkawa E."/>
            <person name="Omura Y."/>
            <person name="Abe K."/>
            <person name="Kamihara K."/>
            <person name="Katsuta N."/>
            <person name="Sato K."/>
            <person name="Tanikawa M."/>
            <person name="Yamazaki M."/>
            <person name="Ninomiya K."/>
            <person name="Ishibashi T."/>
            <person name="Yamashita H."/>
            <person name="Murakawa K."/>
            <person name="Fujimori K."/>
            <person name="Tanai H."/>
            <person name="Kimata M."/>
            <person name="Watanabe M."/>
            <person name="Hiraoka S."/>
            <person name="Chiba Y."/>
            <person name="Ishida S."/>
            <person name="Ono Y."/>
            <person name="Takiguchi S."/>
            <person name="Watanabe S."/>
            <person name="Yosida M."/>
            <person name="Hotuta T."/>
            <person name="Kusano J."/>
            <person name="Kanehori K."/>
            <person name="Takahashi-Fujii A."/>
            <person name="Hara H."/>
            <person name="Tanase T.-O."/>
            <person name="Nomura Y."/>
            <person name="Togiya S."/>
            <person name="Komai F."/>
            <person name="Hara R."/>
            <person name="Takeuchi K."/>
            <person name="Arita M."/>
            <person name="Imose N."/>
            <person name="Musashino K."/>
            <person name="Yuuki H."/>
            <person name="Oshima A."/>
            <person name="Sasaki N."/>
            <person name="Aotsuka S."/>
            <person name="Yoshikawa Y."/>
            <person name="Matsunawa H."/>
            <person name="Ichihara T."/>
            <person name="Shiohata N."/>
            <person name="Sano S."/>
            <person name="Moriya S."/>
            <person name="Momiyama H."/>
            <person name="Satoh N."/>
            <person name="Takami S."/>
            <person name="Terashima Y."/>
            <person name="Suzuki O."/>
            <person name="Nakagawa S."/>
            <person name="Senoh A."/>
            <person name="Mizoguchi H."/>
            <person name="Goto Y."/>
            <person name="Shimizu F."/>
            <person name="Wakebe H."/>
            <person name="Hishigaki H."/>
            <person name="Watanabe T."/>
            <person name="Sugiyama A."/>
            <person name="Takemoto M."/>
            <person name="Kawakami B."/>
            <person name="Yamazaki M."/>
            <person name="Watanabe K."/>
            <person name="Kumagai A."/>
            <person name="Itakura S."/>
            <person name="Fukuzumi Y."/>
            <person name="Fujimori Y."/>
            <person name="Komiyama M."/>
            <person name="Tashiro H."/>
            <person name="Tanigami A."/>
            <person name="Fujiwara T."/>
            <person name="Ono T."/>
            <person name="Yamada K."/>
            <person name="Fujii Y."/>
            <person name="Ozaki K."/>
            <person name="Hirao M."/>
            <person name="Ohmori Y."/>
            <person name="Kawabata A."/>
            <person name="Hikiji T."/>
            <person name="Kobatake N."/>
            <person name="Inagaki H."/>
            <person name="Ikema Y."/>
            <person name="Okamoto S."/>
            <person name="Okitani R."/>
            <person name="Kawakami T."/>
            <person name="Noguchi S."/>
            <person name="Itoh T."/>
            <person name="Shigeta K."/>
            <person name="Senba T."/>
            <person name="Matsumura K."/>
            <person name="Nakajima Y."/>
            <person name="Mizuno T."/>
            <person name="Morinaga M."/>
            <person name="Sasaki M."/>
            <person name="Togashi T."/>
            <person name="Oyama M."/>
            <person name="Hata H."/>
            <person name="Watanabe M."/>
            <person name="Komatsu T."/>
            <person name="Mizushima-Sugano J."/>
            <person name="Satoh T."/>
            <person name="Shirai Y."/>
            <person name="Takahashi Y."/>
            <person name="Nakagawa K."/>
            <person name="Okumura K."/>
            <person name="Nagase T."/>
            <person name="Nomura N."/>
            <person name="Kikuchi H."/>
            <person name="Masuho Y."/>
            <person name="Yamashita R."/>
            <person name="Nakai K."/>
            <person name="Yada T."/>
            <person name="Nakamura Y."/>
            <person name="Ohara O."/>
            <person name="Isogai T."/>
            <person name="Sugano S."/>
        </authorList>
    </citation>
    <scope>NUCLEOTIDE SEQUENCE [LARGE SCALE MRNA]</scope>
    <source>
        <tissue>Tongue</tissue>
    </source>
</reference>
<reference key="4">
    <citation type="submission" date="2005-07" db="EMBL/GenBank/DDBJ databases">
        <authorList>
            <person name="Mural R.J."/>
            <person name="Istrail S."/>
            <person name="Sutton G.G."/>
            <person name="Florea L."/>
            <person name="Halpern A.L."/>
            <person name="Mobarry C.M."/>
            <person name="Lippert R."/>
            <person name="Walenz B."/>
            <person name="Shatkay H."/>
            <person name="Dew I."/>
            <person name="Miller J.R."/>
            <person name="Flanigan M.J."/>
            <person name="Edwards N.J."/>
            <person name="Bolanos R."/>
            <person name="Fasulo D."/>
            <person name="Halldorsson B.V."/>
            <person name="Hannenhalli S."/>
            <person name="Turner R."/>
            <person name="Yooseph S."/>
            <person name="Lu F."/>
            <person name="Nusskern D.R."/>
            <person name="Shue B.C."/>
            <person name="Zheng X.H."/>
            <person name="Zhong F."/>
            <person name="Delcher A.L."/>
            <person name="Huson D.H."/>
            <person name="Kravitz S.A."/>
            <person name="Mouchard L."/>
            <person name="Reinert K."/>
            <person name="Remington K.A."/>
            <person name="Clark A.G."/>
            <person name="Waterman M.S."/>
            <person name="Eichler E.E."/>
            <person name="Adams M.D."/>
            <person name="Hunkapiller M.W."/>
            <person name="Myers E.W."/>
            <person name="Venter J.C."/>
        </authorList>
    </citation>
    <scope>NUCLEOTIDE SEQUENCE [LARGE SCALE GENOMIC DNA]</scope>
</reference>
<reference key="5">
    <citation type="journal article" date="2004" name="Genome Res.">
        <title>The status, quality, and expansion of the NIH full-length cDNA project: the Mammalian Gene Collection (MGC).</title>
        <authorList>
            <consortium name="The MGC Project Team"/>
        </authorList>
    </citation>
    <scope>NUCLEOTIDE SEQUENCE [LARGE SCALE MRNA]</scope>
    <source>
        <tissue>Brain</tissue>
        <tissue>Kidney</tissue>
    </source>
</reference>
<reference key="6">
    <citation type="journal article" date="1996" name="Eur. J. Biochem.">
        <title>Characterization of the human small-ribosomal-subunit proteins by N-terminal and internal sequencing, and mass spectrometry.</title>
        <authorList>
            <person name="Vladimirov S.N."/>
            <person name="Ivanov A.V."/>
            <person name="Karpova G.G."/>
            <person name="Musolyamov A.K."/>
            <person name="Egorov T.A."/>
            <person name="Thiede B."/>
            <person name="Wittmann-Liebold B."/>
            <person name="Otto A."/>
        </authorList>
    </citation>
    <scope>PROTEIN SEQUENCE OF 2-11</scope>
    <source>
        <tissue>Placenta</tissue>
    </source>
</reference>
<reference key="7">
    <citation type="submission" date="2009-12" db="UniProtKB">
        <authorList>
            <person name="Bienvenut W.V."/>
            <person name="Lourenco F."/>
            <person name="Olson M.F."/>
        </authorList>
    </citation>
    <scope>PROTEIN SEQUENCE OF 2-15 AND 51-62</scope>
    <scope>CLEAVAGE OF INITIATOR METHIONINE</scope>
    <scope>IDENTIFICATION BY MASS SPECTROMETRY</scope>
    <source>
        <tissue>Mammary carcinoma</tissue>
    </source>
</reference>
<reference key="8">
    <citation type="journal article" date="2003" name="Nature">
        <title>Proteomic characterization of the human centrosome by protein correlation profiling.</title>
        <authorList>
            <person name="Andersen J.S."/>
            <person name="Wilkinson C.J."/>
            <person name="Mayor T."/>
            <person name="Mortensen P."/>
            <person name="Nigg E.A."/>
            <person name="Mann M."/>
        </authorList>
    </citation>
    <scope>IDENTIFICATION BY MASS SPECTROMETRY</scope>
    <source>
        <tissue>Lymphoblast</tissue>
    </source>
</reference>
<reference key="9">
    <citation type="journal article" date="2009" name="Science">
        <title>Lysine acetylation targets protein complexes and co-regulates major cellular functions.</title>
        <authorList>
            <person name="Choudhary C."/>
            <person name="Kumar C."/>
            <person name="Gnad F."/>
            <person name="Nielsen M.L."/>
            <person name="Rehman M."/>
            <person name="Walther T.C."/>
            <person name="Olsen J.V."/>
            <person name="Mann M."/>
        </authorList>
    </citation>
    <scope>ACETYLATION [LARGE SCALE ANALYSIS] AT LYS-60</scope>
    <scope>IDENTIFICATION BY MASS SPECTROMETRY [LARGE SCALE ANALYSIS]</scope>
</reference>
<reference key="10">
    <citation type="journal article" date="2011" name="BMC Syst. Biol.">
        <title>Initial characterization of the human central proteome.</title>
        <authorList>
            <person name="Burkard T.R."/>
            <person name="Planyavsky M."/>
            <person name="Kaupe I."/>
            <person name="Breitwieser F.P."/>
            <person name="Buerckstuemmer T."/>
            <person name="Bennett K.L."/>
            <person name="Superti-Furga G."/>
            <person name="Colinge J."/>
        </authorList>
    </citation>
    <scope>IDENTIFICATION BY MASS SPECTROMETRY [LARGE SCALE ANALYSIS]</scope>
</reference>
<reference key="11">
    <citation type="journal article" date="2012" name="Proc. Natl. Acad. Sci. U.S.A.">
        <title>N-terminal acetylome analyses and functional insights of the N-terminal acetyltransferase NatB.</title>
        <authorList>
            <person name="Van Damme P."/>
            <person name="Lasa M."/>
            <person name="Polevoda B."/>
            <person name="Gazquez C."/>
            <person name="Elosegui-Artola A."/>
            <person name="Kim D.S."/>
            <person name="De Juan-Pardo E."/>
            <person name="Demeyer K."/>
            <person name="Hole K."/>
            <person name="Larrea E."/>
            <person name="Timmerman E."/>
            <person name="Prieto J."/>
            <person name="Arnesen T."/>
            <person name="Sherman F."/>
            <person name="Gevaert K."/>
            <person name="Aldabe R."/>
        </authorList>
    </citation>
    <scope>IDENTIFICATION BY MASS SPECTROMETRY [LARGE SCALE ANALYSIS]</scope>
</reference>
<reference key="12">
    <citation type="journal article" date="2013" name="J. Proteome Res.">
        <title>Toward a comprehensive characterization of a human cancer cell phosphoproteome.</title>
        <authorList>
            <person name="Zhou H."/>
            <person name="Di Palma S."/>
            <person name="Preisinger C."/>
            <person name="Peng M."/>
            <person name="Polat A.N."/>
            <person name="Heck A.J."/>
            <person name="Mohammed S."/>
        </authorList>
    </citation>
    <scope>PHOSPHORYLATION [LARGE SCALE ANALYSIS] AT SER-3</scope>
    <scope>IDENTIFICATION BY MASS SPECTROMETRY [LARGE SCALE ANALYSIS]</scope>
    <source>
        <tissue>Cervix carcinoma</tissue>
    </source>
</reference>
<reference key="13">
    <citation type="journal article" date="2014" name="Curr. Opin. Struct. Biol.">
        <title>A new system for naming ribosomal proteins.</title>
        <authorList>
            <person name="Ban N."/>
            <person name="Beckmann R."/>
            <person name="Cate J.H.D."/>
            <person name="Dinman J.D."/>
            <person name="Dragon F."/>
            <person name="Ellis S.R."/>
            <person name="Lafontaine D.L.J."/>
            <person name="Lindahl L."/>
            <person name="Liljas A."/>
            <person name="Lipton J.M."/>
            <person name="McAlear M.A."/>
            <person name="Moore P.B."/>
            <person name="Noller H.F."/>
            <person name="Ortega J."/>
            <person name="Panse V.G."/>
            <person name="Ramakrishnan V."/>
            <person name="Spahn C.M.T."/>
            <person name="Steitz T.A."/>
            <person name="Tchorzewski M."/>
            <person name="Tollervey D."/>
            <person name="Warren A.J."/>
            <person name="Williamson J.R."/>
            <person name="Wilson D."/>
            <person name="Yonath A."/>
            <person name="Yusupov M."/>
        </authorList>
    </citation>
    <scope>NOMENCLATURE</scope>
</reference>
<reference key="14">
    <citation type="journal article" date="2014" name="J. Proteomics">
        <title>An enzyme assisted RP-RPLC approach for in-depth analysis of human liver phosphoproteome.</title>
        <authorList>
            <person name="Bian Y."/>
            <person name="Song C."/>
            <person name="Cheng K."/>
            <person name="Dong M."/>
            <person name="Wang F."/>
            <person name="Huang J."/>
            <person name="Sun D."/>
            <person name="Wang L."/>
            <person name="Ye M."/>
            <person name="Zou H."/>
        </authorList>
    </citation>
    <scope>IDENTIFICATION BY MASS SPECTROMETRY [LARGE SCALE ANALYSIS]</scope>
    <source>
        <tissue>Liver</tissue>
    </source>
</reference>
<reference key="15">
    <citation type="journal article" date="2015" name="Proteomics">
        <title>N-terminome analysis of the human mitochondrial proteome.</title>
        <authorList>
            <person name="Vaca Jacome A.S."/>
            <person name="Rabilloud T."/>
            <person name="Schaeffer-Reiss C."/>
            <person name="Rompais M."/>
            <person name="Ayoub D."/>
            <person name="Lane L."/>
            <person name="Bairoch A."/>
            <person name="Van Dorsselaer A."/>
            <person name="Carapito C."/>
        </authorList>
    </citation>
    <scope>IDENTIFICATION BY MASS SPECTROMETRY [LARGE SCALE ANALYSIS]</scope>
</reference>
<reference key="16">
    <citation type="journal article" date="2013" name="Nature">
        <title>Structures of the human and Drosophila 80S ribosome.</title>
        <authorList>
            <person name="Anger A.M."/>
            <person name="Armache J.P."/>
            <person name="Berninghausen O."/>
            <person name="Habeck M."/>
            <person name="Subklewe M."/>
            <person name="Wilson D.N."/>
            <person name="Beckmann R."/>
        </authorList>
    </citation>
    <scope>STRUCTURE BY ELECTRON MICROSCOPY (5.0 ANGSTROMS) OF RIBOSOME</scope>
    <scope>FUNCTION</scope>
    <scope>SUBUNIT</scope>
    <scope>SUBCELLULAR LOCATION</scope>
</reference>
<reference evidence="8 9 10" key="17">
    <citation type="journal article" date="2021" name="Science">
        <title>Nucleolar maturation of the human small subunit processome.</title>
        <authorList>
            <person name="Singh S."/>
            <person name="Vanden Broeck A."/>
            <person name="Miller L."/>
            <person name="Chaker-Margot M."/>
            <person name="Klinge S."/>
        </authorList>
    </citation>
    <scope>STRUCTURE BY ELECTRON MICROSCOPY (2.70 ANGSTROMS)</scope>
    <scope>FUNCTION</scope>
    <scope>SUBUNIT</scope>
    <scope>SUBCELLULAR LOCATION</scope>
</reference>
<accession>P62249</accession>
<accession>B2RDD5</accession>
<accession>P17008</accession>
<name>RS16_HUMAN</name>
<sequence length="146" mass="16445">MPSKGPLQSVQVFGRKKTATAVAHCKRGNGLIKVNGRPLEMIEPRTLQYKLLEPVLLLGKERFAGVDIRVRVKGGGHVAQIYAIRQSISKALVAYYQKYVDEASKKEIKDILIQYDRTLLVADPRRCESKKFGGPGARARYQKSYR</sequence>
<evidence type="ECO:0000269" key="1">
    <source>
    </source>
</evidence>
<evidence type="ECO:0000269" key="2">
    <source>
    </source>
</evidence>
<evidence type="ECO:0000269" key="3">
    <source>
    </source>
</evidence>
<evidence type="ECO:0000269" key="4">
    <source ref="7"/>
</evidence>
<evidence type="ECO:0000303" key="5">
    <source>
    </source>
</evidence>
<evidence type="ECO:0000305" key="6"/>
<evidence type="ECO:0000312" key="7">
    <source>
        <dbReference type="HGNC" id="HGNC:10396"/>
    </source>
</evidence>
<evidence type="ECO:0007744" key="8">
    <source>
        <dbReference type="PDB" id="7MQ8"/>
    </source>
</evidence>
<evidence type="ECO:0007744" key="9">
    <source>
        <dbReference type="PDB" id="7MQ9"/>
    </source>
</evidence>
<evidence type="ECO:0007744" key="10">
    <source>
        <dbReference type="PDB" id="7MQA"/>
    </source>
</evidence>
<evidence type="ECO:0007744" key="11">
    <source>
    </source>
</evidence>
<evidence type="ECO:0007744" key="12">
    <source>
    </source>
</evidence>
<evidence type="ECO:0007829" key="13">
    <source>
        <dbReference type="PDB" id="7R4X"/>
    </source>
</evidence>
<organism>
    <name type="scientific">Homo sapiens</name>
    <name type="common">Human</name>
    <dbReference type="NCBI Taxonomy" id="9606"/>
    <lineage>
        <taxon>Eukaryota</taxon>
        <taxon>Metazoa</taxon>
        <taxon>Chordata</taxon>
        <taxon>Craniata</taxon>
        <taxon>Vertebrata</taxon>
        <taxon>Euteleostomi</taxon>
        <taxon>Mammalia</taxon>
        <taxon>Eutheria</taxon>
        <taxon>Euarchontoglires</taxon>
        <taxon>Primates</taxon>
        <taxon>Haplorrhini</taxon>
        <taxon>Catarrhini</taxon>
        <taxon>Hominidae</taxon>
        <taxon>Homo</taxon>
    </lineage>
</organism>
<dbReference type="EMBL" id="M60854">
    <property type="protein sequence ID" value="AAA60583.1"/>
    <property type="molecule type" value="mRNA"/>
</dbReference>
<dbReference type="EMBL" id="AB061841">
    <property type="protein sequence ID" value="BAB79479.1"/>
    <property type="molecule type" value="Genomic_DNA"/>
</dbReference>
<dbReference type="EMBL" id="AK315498">
    <property type="protein sequence ID" value="BAG37882.1"/>
    <property type="molecule type" value="mRNA"/>
</dbReference>
<dbReference type="EMBL" id="CH471126">
    <property type="protein sequence ID" value="EAW56894.1"/>
    <property type="molecule type" value="Genomic_DNA"/>
</dbReference>
<dbReference type="EMBL" id="BC004324">
    <property type="protein sequence ID" value="AAH04324.1"/>
    <property type="molecule type" value="mRNA"/>
</dbReference>
<dbReference type="EMBL" id="BC007977">
    <property type="protein sequence ID" value="AAH07977.1"/>
    <property type="molecule type" value="mRNA"/>
</dbReference>
<dbReference type="CCDS" id="CCDS12535.1"/>
<dbReference type="PIR" id="A39760">
    <property type="entry name" value="R3HU16"/>
</dbReference>
<dbReference type="RefSeq" id="NP_001011.1">
    <property type="nucleotide sequence ID" value="NM_001020.6"/>
</dbReference>
<dbReference type="PDB" id="4UG0">
    <property type="method" value="EM"/>
    <property type="chains" value="SQ=1-146"/>
</dbReference>
<dbReference type="PDB" id="4V6X">
    <property type="method" value="EM"/>
    <property type="resolution" value="5.00 A"/>
    <property type="chains" value="AQ=1-146"/>
</dbReference>
<dbReference type="PDB" id="5A2Q">
    <property type="method" value="EM"/>
    <property type="resolution" value="3.90 A"/>
    <property type="chains" value="Q=1-146"/>
</dbReference>
<dbReference type="PDB" id="5AJ0">
    <property type="method" value="EM"/>
    <property type="resolution" value="3.50 A"/>
    <property type="chains" value="BQ=1-146"/>
</dbReference>
<dbReference type="PDB" id="5FLX">
    <property type="method" value="EM"/>
    <property type="resolution" value="3.90 A"/>
    <property type="chains" value="Q=1-146"/>
</dbReference>
<dbReference type="PDB" id="5LKS">
    <property type="method" value="EM"/>
    <property type="resolution" value="3.60 A"/>
    <property type="chains" value="SQ=1-146"/>
</dbReference>
<dbReference type="PDB" id="5OA3">
    <property type="method" value="EM"/>
    <property type="resolution" value="4.30 A"/>
    <property type="chains" value="Q=1-146"/>
</dbReference>
<dbReference type="PDB" id="5T2C">
    <property type="method" value="EM"/>
    <property type="resolution" value="3.60 A"/>
    <property type="chains" value="Ay=1-146"/>
</dbReference>
<dbReference type="PDB" id="5VYC">
    <property type="method" value="X-ray"/>
    <property type="resolution" value="6.00 A"/>
    <property type="chains" value="Q1/Q2/Q3/Q4/Q5/Q6=1-146"/>
</dbReference>
<dbReference type="PDB" id="6FEC">
    <property type="method" value="EM"/>
    <property type="resolution" value="6.30 A"/>
    <property type="chains" value="H=6-146"/>
</dbReference>
<dbReference type="PDB" id="6G18">
    <property type="method" value="EM"/>
    <property type="resolution" value="3.60 A"/>
    <property type="chains" value="Q=1-146"/>
</dbReference>
<dbReference type="PDB" id="6G4S">
    <property type="method" value="EM"/>
    <property type="resolution" value="4.00 A"/>
    <property type="chains" value="Q=1-146"/>
</dbReference>
<dbReference type="PDB" id="6G4W">
    <property type="method" value="EM"/>
    <property type="resolution" value="4.50 A"/>
    <property type="chains" value="Q=1-146"/>
</dbReference>
<dbReference type="PDB" id="6G51">
    <property type="method" value="EM"/>
    <property type="resolution" value="4.10 A"/>
    <property type="chains" value="Q=1-146"/>
</dbReference>
<dbReference type="PDB" id="6G53">
    <property type="method" value="EM"/>
    <property type="resolution" value="4.50 A"/>
    <property type="chains" value="Q=1-146"/>
</dbReference>
<dbReference type="PDB" id="6G5H">
    <property type="method" value="EM"/>
    <property type="resolution" value="3.60 A"/>
    <property type="chains" value="Q=1-146"/>
</dbReference>
<dbReference type="PDB" id="6G5I">
    <property type="method" value="EM"/>
    <property type="resolution" value="3.50 A"/>
    <property type="chains" value="Q=1-146"/>
</dbReference>
<dbReference type="PDB" id="6IP5">
    <property type="method" value="EM"/>
    <property type="resolution" value="3.90 A"/>
    <property type="chains" value="2x=1-146"/>
</dbReference>
<dbReference type="PDB" id="6IP6">
    <property type="method" value="EM"/>
    <property type="resolution" value="4.50 A"/>
    <property type="chains" value="2x=1-146"/>
</dbReference>
<dbReference type="PDB" id="6IP8">
    <property type="method" value="EM"/>
    <property type="resolution" value="3.90 A"/>
    <property type="chains" value="2x=1-146"/>
</dbReference>
<dbReference type="PDB" id="6OLE">
    <property type="method" value="EM"/>
    <property type="resolution" value="3.10 A"/>
    <property type="chains" value="SQ=1-146"/>
</dbReference>
<dbReference type="PDB" id="6OLF">
    <property type="method" value="EM"/>
    <property type="resolution" value="3.90 A"/>
    <property type="chains" value="SQ=1-146"/>
</dbReference>
<dbReference type="PDB" id="6OLG">
    <property type="method" value="EM"/>
    <property type="resolution" value="3.40 A"/>
    <property type="chains" value="BQ=8-146"/>
</dbReference>
<dbReference type="PDB" id="6OLI">
    <property type="method" value="EM"/>
    <property type="resolution" value="3.50 A"/>
    <property type="chains" value="SQ=1-146"/>
</dbReference>
<dbReference type="PDB" id="6OLZ">
    <property type="method" value="EM"/>
    <property type="resolution" value="3.90 A"/>
    <property type="chains" value="BQ=8-146"/>
</dbReference>
<dbReference type="PDB" id="6OM0">
    <property type="method" value="EM"/>
    <property type="resolution" value="3.10 A"/>
    <property type="chains" value="SQ=1-146"/>
</dbReference>
<dbReference type="PDB" id="6OM7">
    <property type="method" value="EM"/>
    <property type="resolution" value="3.70 A"/>
    <property type="chains" value="SQ=1-146"/>
</dbReference>
<dbReference type="PDB" id="6QZP">
    <property type="method" value="EM"/>
    <property type="resolution" value="2.90 A"/>
    <property type="chains" value="SQ=6-146"/>
</dbReference>
<dbReference type="PDB" id="6XA1">
    <property type="method" value="EM"/>
    <property type="resolution" value="2.80 A"/>
    <property type="chains" value="SQ=7-146"/>
</dbReference>
<dbReference type="PDB" id="6Y0G">
    <property type="method" value="EM"/>
    <property type="resolution" value="3.20 A"/>
    <property type="chains" value="SQ=1-146"/>
</dbReference>
<dbReference type="PDB" id="6Y2L">
    <property type="method" value="EM"/>
    <property type="resolution" value="3.00 A"/>
    <property type="chains" value="SQ=1-146"/>
</dbReference>
<dbReference type="PDB" id="6Y57">
    <property type="method" value="EM"/>
    <property type="resolution" value="3.50 A"/>
    <property type="chains" value="SQ=1-146"/>
</dbReference>
<dbReference type="PDB" id="6YBS">
    <property type="method" value="EM"/>
    <property type="resolution" value="3.10 A"/>
    <property type="chains" value="Y=1-146"/>
</dbReference>
<dbReference type="PDB" id="6Z6L">
    <property type="method" value="EM"/>
    <property type="resolution" value="3.00 A"/>
    <property type="chains" value="SQ=1-146"/>
</dbReference>
<dbReference type="PDB" id="6Z6M">
    <property type="method" value="EM"/>
    <property type="resolution" value="3.10 A"/>
    <property type="chains" value="SQ=1-146"/>
</dbReference>
<dbReference type="PDB" id="6Z6N">
    <property type="method" value="EM"/>
    <property type="resolution" value="2.90 A"/>
    <property type="chains" value="SQ=1-146"/>
</dbReference>
<dbReference type="PDB" id="6ZLW">
    <property type="method" value="EM"/>
    <property type="resolution" value="2.60 A"/>
    <property type="chains" value="R=1-146"/>
</dbReference>
<dbReference type="PDB" id="6ZM7">
    <property type="method" value="EM"/>
    <property type="resolution" value="2.70 A"/>
    <property type="chains" value="SQ=1-146"/>
</dbReference>
<dbReference type="PDB" id="6ZME">
    <property type="method" value="EM"/>
    <property type="resolution" value="3.00 A"/>
    <property type="chains" value="SQ=1-146"/>
</dbReference>
<dbReference type="PDB" id="6ZMI">
    <property type="method" value="EM"/>
    <property type="resolution" value="2.60 A"/>
    <property type="chains" value="SQ=1-146"/>
</dbReference>
<dbReference type="PDB" id="6ZMO">
    <property type="method" value="EM"/>
    <property type="resolution" value="3.10 A"/>
    <property type="chains" value="SQ=1-146"/>
</dbReference>
<dbReference type="PDB" id="6ZMT">
    <property type="method" value="EM"/>
    <property type="resolution" value="3.00 A"/>
    <property type="chains" value="R=1-146"/>
</dbReference>
<dbReference type="PDB" id="6ZMW">
    <property type="method" value="EM"/>
    <property type="resolution" value="3.70 A"/>
    <property type="chains" value="Y=1-146"/>
</dbReference>
<dbReference type="PDB" id="6ZN5">
    <property type="method" value="EM"/>
    <property type="resolution" value="3.20 A"/>
    <property type="chains" value="R=8-146"/>
</dbReference>
<dbReference type="PDB" id="6ZOJ">
    <property type="method" value="EM"/>
    <property type="resolution" value="2.80 A"/>
    <property type="chains" value="Q=1-146"/>
</dbReference>
<dbReference type="PDB" id="6ZOL">
    <property type="method" value="EM"/>
    <property type="resolution" value="2.80 A"/>
    <property type="chains" value="Q=1-146"/>
</dbReference>
<dbReference type="PDB" id="6ZON">
    <property type="method" value="EM"/>
    <property type="resolution" value="3.00 A"/>
    <property type="chains" value="g=1-146"/>
</dbReference>
<dbReference type="PDB" id="6ZP4">
    <property type="method" value="EM"/>
    <property type="resolution" value="2.90 A"/>
    <property type="chains" value="g=1-146"/>
</dbReference>
<dbReference type="PDB" id="6ZUO">
    <property type="method" value="EM"/>
    <property type="resolution" value="3.10 A"/>
    <property type="chains" value="Q=1-146"/>
</dbReference>
<dbReference type="PDB" id="6ZV6">
    <property type="method" value="EM"/>
    <property type="resolution" value="2.90 A"/>
    <property type="chains" value="Q=1-146"/>
</dbReference>
<dbReference type="PDB" id="6ZVH">
    <property type="method" value="EM"/>
    <property type="resolution" value="2.90 A"/>
    <property type="chains" value="Q=3-146"/>
</dbReference>
<dbReference type="PDB" id="6ZVJ">
    <property type="method" value="EM"/>
    <property type="resolution" value="3.80 A"/>
    <property type="chains" value="g=9-146"/>
</dbReference>
<dbReference type="PDB" id="6ZXD">
    <property type="method" value="EM"/>
    <property type="resolution" value="3.20 A"/>
    <property type="chains" value="Q=1-146"/>
</dbReference>
<dbReference type="PDB" id="6ZXE">
    <property type="method" value="EM"/>
    <property type="resolution" value="3.00 A"/>
    <property type="chains" value="Q=1-146"/>
</dbReference>
<dbReference type="PDB" id="6ZXF">
    <property type="method" value="EM"/>
    <property type="resolution" value="3.70 A"/>
    <property type="chains" value="Q=1-146"/>
</dbReference>
<dbReference type="PDB" id="6ZXG">
    <property type="method" value="EM"/>
    <property type="resolution" value="2.60 A"/>
    <property type="chains" value="Q=1-146"/>
</dbReference>
<dbReference type="PDB" id="6ZXH">
    <property type="method" value="EM"/>
    <property type="resolution" value="2.70 A"/>
    <property type="chains" value="Q=1-146"/>
</dbReference>
<dbReference type="PDB" id="7A09">
    <property type="method" value="EM"/>
    <property type="resolution" value="3.50 A"/>
    <property type="chains" value="g=1-146"/>
</dbReference>
<dbReference type="PDB" id="7K5I">
    <property type="method" value="EM"/>
    <property type="resolution" value="2.90 A"/>
    <property type="chains" value="Q=1-146"/>
</dbReference>
<dbReference type="PDB" id="7MQ8">
    <property type="method" value="EM"/>
    <property type="resolution" value="3.60 A"/>
    <property type="chains" value="LC=1-146"/>
</dbReference>
<dbReference type="PDB" id="7MQ9">
    <property type="method" value="EM"/>
    <property type="resolution" value="3.87 A"/>
    <property type="chains" value="LC=1-146"/>
</dbReference>
<dbReference type="PDB" id="7MQA">
    <property type="method" value="EM"/>
    <property type="resolution" value="2.70 A"/>
    <property type="chains" value="LC=1-146"/>
</dbReference>
<dbReference type="PDB" id="7QP6">
    <property type="method" value="EM"/>
    <property type="resolution" value="4.70 A"/>
    <property type="chains" value="Y=1-146"/>
</dbReference>
<dbReference type="PDB" id="7QP7">
    <property type="method" value="EM"/>
    <property type="resolution" value="3.70 A"/>
    <property type="chains" value="Y=1-146"/>
</dbReference>
<dbReference type="PDB" id="7R4X">
    <property type="method" value="EM"/>
    <property type="resolution" value="2.15 A"/>
    <property type="chains" value="Q=1-146"/>
</dbReference>
<dbReference type="PDB" id="7TQL">
    <property type="method" value="EM"/>
    <property type="resolution" value="3.40 A"/>
    <property type="chains" value="R=8-146"/>
</dbReference>
<dbReference type="PDB" id="7WTT">
    <property type="method" value="EM"/>
    <property type="resolution" value="3.10 A"/>
    <property type="chains" value="Q=1-146"/>
</dbReference>
<dbReference type="PDB" id="7WTU">
    <property type="method" value="EM"/>
    <property type="resolution" value="3.00 A"/>
    <property type="chains" value="Q=1-146"/>
</dbReference>
<dbReference type="PDB" id="7WTV">
    <property type="method" value="EM"/>
    <property type="resolution" value="3.50 A"/>
    <property type="chains" value="Q=1-146"/>
</dbReference>
<dbReference type="PDB" id="7WTW">
    <property type="method" value="EM"/>
    <property type="resolution" value="3.20 A"/>
    <property type="chains" value="Q=1-146"/>
</dbReference>
<dbReference type="PDB" id="7WTX">
    <property type="method" value="EM"/>
    <property type="resolution" value="3.10 A"/>
    <property type="chains" value="Q=1-146"/>
</dbReference>
<dbReference type="PDB" id="7WTZ">
    <property type="method" value="EM"/>
    <property type="resolution" value="3.00 A"/>
    <property type="chains" value="Q=1-146"/>
</dbReference>
<dbReference type="PDB" id="7WU0">
    <property type="method" value="EM"/>
    <property type="resolution" value="3.30 A"/>
    <property type="chains" value="Q=1-146"/>
</dbReference>
<dbReference type="PDB" id="7XNX">
    <property type="method" value="EM"/>
    <property type="resolution" value="2.70 A"/>
    <property type="chains" value="SQ=1-146"/>
</dbReference>
<dbReference type="PDB" id="7XNY">
    <property type="method" value="EM"/>
    <property type="resolution" value="2.50 A"/>
    <property type="chains" value="SQ=1-146"/>
</dbReference>
<dbReference type="PDB" id="8G5Y">
    <property type="method" value="EM"/>
    <property type="resolution" value="2.29 A"/>
    <property type="chains" value="SQ=1-146"/>
</dbReference>
<dbReference type="PDB" id="8G60">
    <property type="method" value="EM"/>
    <property type="resolution" value="2.54 A"/>
    <property type="chains" value="SQ=1-146"/>
</dbReference>
<dbReference type="PDB" id="8G61">
    <property type="method" value="EM"/>
    <property type="resolution" value="2.94 A"/>
    <property type="chains" value="SQ=1-146"/>
</dbReference>
<dbReference type="PDB" id="8G6J">
    <property type="method" value="EM"/>
    <property type="resolution" value="2.80 A"/>
    <property type="chains" value="SQ=1-146"/>
</dbReference>
<dbReference type="PDB" id="8GLP">
    <property type="method" value="EM"/>
    <property type="resolution" value="1.67 A"/>
    <property type="chains" value="SQ=1-146"/>
</dbReference>
<dbReference type="PDB" id="8IFD">
    <property type="method" value="EM"/>
    <property type="resolution" value="2.59 A"/>
    <property type="chains" value="2x=1-146"/>
</dbReference>
<dbReference type="PDB" id="8IFE">
    <property type="method" value="EM"/>
    <property type="resolution" value="2.57 A"/>
    <property type="chains" value="2x=1-146"/>
</dbReference>
<dbReference type="PDB" id="8JDJ">
    <property type="method" value="EM"/>
    <property type="resolution" value="2.50 A"/>
    <property type="chains" value="AC=1-146"/>
</dbReference>
<dbReference type="PDB" id="8JDK">
    <property type="method" value="EM"/>
    <property type="resolution" value="2.26 A"/>
    <property type="chains" value="AC=1-146"/>
</dbReference>
<dbReference type="PDB" id="8JDL">
    <property type="method" value="EM"/>
    <property type="resolution" value="2.42 A"/>
    <property type="chains" value="AC=1-146"/>
</dbReference>
<dbReference type="PDB" id="8JDM">
    <property type="method" value="EM"/>
    <property type="resolution" value="2.67 A"/>
    <property type="chains" value="AC=1-146"/>
</dbReference>
<dbReference type="PDB" id="8K2C">
    <property type="method" value="EM"/>
    <property type="resolution" value="2.40 A"/>
    <property type="chains" value="SQ=1-146"/>
</dbReference>
<dbReference type="PDB" id="8OZ0">
    <property type="method" value="EM"/>
    <property type="resolution" value="3.50 A"/>
    <property type="chains" value="g=1-146"/>
</dbReference>
<dbReference type="PDB" id="8PJ1">
    <property type="method" value="EM"/>
    <property type="resolution" value="3.40 A"/>
    <property type="chains" value="Y=1-146"/>
</dbReference>
<dbReference type="PDB" id="8PJ2">
    <property type="method" value="EM"/>
    <property type="resolution" value="3.40 A"/>
    <property type="chains" value="Y=1-146"/>
</dbReference>
<dbReference type="PDB" id="8PJ3">
    <property type="method" value="EM"/>
    <property type="resolution" value="3.70 A"/>
    <property type="chains" value="Y=1-146"/>
</dbReference>
<dbReference type="PDB" id="8PJ4">
    <property type="method" value="EM"/>
    <property type="resolution" value="3.20 A"/>
    <property type="chains" value="Y=1-146"/>
</dbReference>
<dbReference type="PDB" id="8PJ5">
    <property type="method" value="EM"/>
    <property type="resolution" value="2.90 A"/>
    <property type="chains" value="Y=1-146"/>
</dbReference>
<dbReference type="PDB" id="8PJ6">
    <property type="method" value="EM"/>
    <property type="resolution" value="2.90 A"/>
    <property type="chains" value="Y=1-146"/>
</dbReference>
<dbReference type="PDB" id="8PPK">
    <property type="method" value="EM"/>
    <property type="resolution" value="2.98 A"/>
    <property type="chains" value="Q=1-146"/>
</dbReference>
<dbReference type="PDB" id="8PPL">
    <property type="method" value="EM"/>
    <property type="resolution" value="2.65 A"/>
    <property type="chains" value="AQ=1-146"/>
</dbReference>
<dbReference type="PDB" id="8QOI">
    <property type="method" value="EM"/>
    <property type="resolution" value="1.90 A"/>
    <property type="chains" value="SQ=1-146"/>
</dbReference>
<dbReference type="PDB" id="8T4S">
    <property type="method" value="EM"/>
    <property type="resolution" value="2.60 A"/>
    <property type="chains" value="Q=1-146"/>
</dbReference>
<dbReference type="PDB" id="8UKB">
    <property type="method" value="EM"/>
    <property type="resolution" value="3.05 A"/>
    <property type="chains" value="SQ=3-146"/>
</dbReference>
<dbReference type="PDB" id="8XP2">
    <property type="method" value="EM"/>
    <property type="resolution" value="3.20 A"/>
    <property type="chains" value="SQ=1-146"/>
</dbReference>
<dbReference type="PDB" id="8XP3">
    <property type="method" value="EM"/>
    <property type="resolution" value="3.40 A"/>
    <property type="chains" value="SQ=1-146"/>
</dbReference>
<dbReference type="PDB" id="8XSX">
    <property type="method" value="EM"/>
    <property type="resolution" value="2.40 A"/>
    <property type="chains" value="SQ=1-146"/>
</dbReference>
<dbReference type="PDB" id="8XSY">
    <property type="method" value="EM"/>
    <property type="resolution" value="3.00 A"/>
    <property type="chains" value="SQ=1-146"/>
</dbReference>
<dbReference type="PDB" id="8XSZ">
    <property type="method" value="EM"/>
    <property type="resolution" value="3.20 A"/>
    <property type="chains" value="SQ=1-146"/>
</dbReference>
<dbReference type="PDB" id="8XXL">
    <property type="method" value="EM"/>
    <property type="resolution" value="2.90 A"/>
    <property type="chains" value="SQ=1-146"/>
</dbReference>
<dbReference type="PDB" id="8XXM">
    <property type="method" value="EM"/>
    <property type="resolution" value="3.20 A"/>
    <property type="chains" value="SQ=1-146"/>
</dbReference>
<dbReference type="PDB" id="8XXN">
    <property type="method" value="EM"/>
    <property type="resolution" value="3.60 A"/>
    <property type="chains" value="SQ=1-146"/>
</dbReference>
<dbReference type="PDB" id="8Y0W">
    <property type="method" value="EM"/>
    <property type="resolution" value="3.40 A"/>
    <property type="chains" value="SQ=1-146"/>
</dbReference>
<dbReference type="PDB" id="8Y0X">
    <property type="method" value="EM"/>
    <property type="resolution" value="3.30 A"/>
    <property type="chains" value="SQ=1-146"/>
</dbReference>
<dbReference type="PDB" id="8YOO">
    <property type="method" value="EM"/>
    <property type="resolution" value="2.00 A"/>
    <property type="chains" value="SQ=1-146"/>
</dbReference>
<dbReference type="PDB" id="8YOP">
    <property type="method" value="EM"/>
    <property type="resolution" value="2.20 A"/>
    <property type="chains" value="SQ=1-146"/>
</dbReference>
<dbReference type="PDB" id="8ZDB">
    <property type="method" value="EM"/>
    <property type="resolution" value="3.60 A"/>
    <property type="chains" value="Q=1-146"/>
</dbReference>
<dbReference type="PDB" id="8ZDC">
    <property type="method" value="EM"/>
    <property type="resolution" value="3.80 A"/>
    <property type="chains" value="Q=1-146"/>
</dbReference>
<dbReference type="PDB" id="8ZDD">
    <property type="method" value="EM"/>
    <property type="resolution" value="3.70 A"/>
    <property type="chains" value="Q=1-146"/>
</dbReference>
<dbReference type="PDB" id="9BKD">
    <property type="method" value="EM"/>
    <property type="resolution" value="2.60 A"/>
    <property type="chains" value="Y=1-146"/>
</dbReference>
<dbReference type="PDB" id="9BLN">
    <property type="method" value="EM"/>
    <property type="resolution" value="3.90 A"/>
    <property type="chains" value="Y=1-146"/>
</dbReference>
<dbReference type="PDB" id="9C3H">
    <property type="method" value="EM"/>
    <property type="resolution" value="2.00 A"/>
    <property type="chains" value="SQ=1-146"/>
</dbReference>
<dbReference type="PDB" id="9G8M">
    <property type="method" value="EM"/>
    <property type="resolution" value="3.30 A"/>
    <property type="chains" value="SQ=1-146"/>
</dbReference>
<dbReference type="PDB" id="9G8O">
    <property type="method" value="EM"/>
    <property type="resolution" value="3.40 A"/>
    <property type="chains" value="SQ=1-146"/>
</dbReference>
<dbReference type="PDBsum" id="4UG0"/>
<dbReference type="PDBsum" id="4V6X"/>
<dbReference type="PDBsum" id="5A2Q"/>
<dbReference type="PDBsum" id="5AJ0"/>
<dbReference type="PDBsum" id="5FLX"/>
<dbReference type="PDBsum" id="5LKS"/>
<dbReference type="PDBsum" id="5OA3"/>
<dbReference type="PDBsum" id="5T2C"/>
<dbReference type="PDBsum" id="5VYC"/>
<dbReference type="PDBsum" id="6FEC"/>
<dbReference type="PDBsum" id="6G18"/>
<dbReference type="PDBsum" id="6G4S"/>
<dbReference type="PDBsum" id="6G4W"/>
<dbReference type="PDBsum" id="6G51"/>
<dbReference type="PDBsum" id="6G53"/>
<dbReference type="PDBsum" id="6G5H"/>
<dbReference type="PDBsum" id="6G5I"/>
<dbReference type="PDBsum" id="6IP5"/>
<dbReference type="PDBsum" id="6IP6"/>
<dbReference type="PDBsum" id="6IP8"/>
<dbReference type="PDBsum" id="6OLE"/>
<dbReference type="PDBsum" id="6OLF"/>
<dbReference type="PDBsum" id="6OLG"/>
<dbReference type="PDBsum" id="6OLI"/>
<dbReference type="PDBsum" id="6OLZ"/>
<dbReference type="PDBsum" id="6OM0"/>
<dbReference type="PDBsum" id="6OM7"/>
<dbReference type="PDBsum" id="6QZP"/>
<dbReference type="PDBsum" id="6XA1"/>
<dbReference type="PDBsum" id="6Y0G"/>
<dbReference type="PDBsum" id="6Y2L"/>
<dbReference type="PDBsum" id="6Y57"/>
<dbReference type="PDBsum" id="6YBS"/>
<dbReference type="PDBsum" id="6Z6L"/>
<dbReference type="PDBsum" id="6Z6M"/>
<dbReference type="PDBsum" id="6Z6N"/>
<dbReference type="PDBsum" id="6ZLW"/>
<dbReference type="PDBsum" id="6ZM7"/>
<dbReference type="PDBsum" id="6ZME"/>
<dbReference type="PDBsum" id="6ZMI"/>
<dbReference type="PDBsum" id="6ZMO"/>
<dbReference type="PDBsum" id="6ZMT"/>
<dbReference type="PDBsum" id="6ZMW"/>
<dbReference type="PDBsum" id="6ZN5"/>
<dbReference type="PDBsum" id="6ZOJ"/>
<dbReference type="PDBsum" id="6ZOL"/>
<dbReference type="PDBsum" id="6ZON"/>
<dbReference type="PDBsum" id="6ZP4"/>
<dbReference type="PDBsum" id="6ZUO"/>
<dbReference type="PDBsum" id="6ZV6"/>
<dbReference type="PDBsum" id="6ZVH"/>
<dbReference type="PDBsum" id="6ZVJ"/>
<dbReference type="PDBsum" id="6ZXD"/>
<dbReference type="PDBsum" id="6ZXE"/>
<dbReference type="PDBsum" id="6ZXF"/>
<dbReference type="PDBsum" id="6ZXG"/>
<dbReference type="PDBsum" id="6ZXH"/>
<dbReference type="PDBsum" id="7A09"/>
<dbReference type="PDBsum" id="7K5I"/>
<dbReference type="PDBsum" id="7MQ8"/>
<dbReference type="PDBsum" id="7MQ9"/>
<dbReference type="PDBsum" id="7MQA"/>
<dbReference type="PDBsum" id="7QP6"/>
<dbReference type="PDBsum" id="7QP7"/>
<dbReference type="PDBsum" id="7R4X"/>
<dbReference type="PDBsum" id="7TQL"/>
<dbReference type="PDBsum" id="7WTT"/>
<dbReference type="PDBsum" id="7WTU"/>
<dbReference type="PDBsum" id="7WTV"/>
<dbReference type="PDBsum" id="7WTW"/>
<dbReference type="PDBsum" id="7WTX"/>
<dbReference type="PDBsum" id="7WTZ"/>
<dbReference type="PDBsum" id="7WU0"/>
<dbReference type="PDBsum" id="7XNX"/>
<dbReference type="PDBsum" id="7XNY"/>
<dbReference type="PDBsum" id="8G5Y"/>
<dbReference type="PDBsum" id="8G60"/>
<dbReference type="PDBsum" id="8G61"/>
<dbReference type="PDBsum" id="8G6J"/>
<dbReference type="PDBsum" id="8GLP"/>
<dbReference type="PDBsum" id="8IFD"/>
<dbReference type="PDBsum" id="8IFE"/>
<dbReference type="PDBsum" id="8JDJ"/>
<dbReference type="PDBsum" id="8JDK"/>
<dbReference type="PDBsum" id="8JDL"/>
<dbReference type="PDBsum" id="8JDM"/>
<dbReference type="PDBsum" id="8K2C"/>
<dbReference type="PDBsum" id="8OZ0"/>
<dbReference type="PDBsum" id="8PJ1"/>
<dbReference type="PDBsum" id="8PJ2"/>
<dbReference type="PDBsum" id="8PJ3"/>
<dbReference type="PDBsum" id="8PJ4"/>
<dbReference type="PDBsum" id="8PJ5"/>
<dbReference type="PDBsum" id="8PJ6"/>
<dbReference type="PDBsum" id="8PPK"/>
<dbReference type="PDBsum" id="8PPL"/>
<dbReference type="PDBsum" id="8QOI"/>
<dbReference type="PDBsum" id="8T4S"/>
<dbReference type="PDBsum" id="8UKB"/>
<dbReference type="PDBsum" id="8XP2"/>
<dbReference type="PDBsum" id="8XP3"/>
<dbReference type="PDBsum" id="8XSX"/>
<dbReference type="PDBsum" id="8XSY"/>
<dbReference type="PDBsum" id="8XSZ"/>
<dbReference type="PDBsum" id="8XXL"/>
<dbReference type="PDBsum" id="8XXM"/>
<dbReference type="PDBsum" id="8XXN"/>
<dbReference type="PDBsum" id="8Y0W"/>
<dbReference type="PDBsum" id="8Y0X"/>
<dbReference type="PDBsum" id="8YOO"/>
<dbReference type="PDBsum" id="8YOP"/>
<dbReference type="PDBsum" id="8ZDB"/>
<dbReference type="PDBsum" id="8ZDC"/>
<dbReference type="PDBsum" id="8ZDD"/>
<dbReference type="PDBsum" id="9BKD"/>
<dbReference type="PDBsum" id="9BLN"/>
<dbReference type="PDBsum" id="9C3H"/>
<dbReference type="PDBsum" id="9G8M"/>
<dbReference type="PDBsum" id="9G8O"/>
<dbReference type="EMDB" id="EMD-10668"/>
<dbReference type="EMDB" id="EMD-10674"/>
<dbReference type="EMDB" id="EMD-10690"/>
<dbReference type="EMDB" id="EMD-10772"/>
<dbReference type="EMDB" id="EMD-11098"/>
<dbReference type="EMDB" id="EMD-11099"/>
<dbReference type="EMDB" id="EMD-11100"/>
<dbReference type="EMDB" id="EMD-11276"/>
<dbReference type="EMDB" id="EMD-11288"/>
<dbReference type="EMDB" id="EMD-11289"/>
<dbReference type="EMDB" id="EMD-11292"/>
<dbReference type="EMDB" id="EMD-11299"/>
<dbReference type="EMDB" id="EMD-11301"/>
<dbReference type="EMDB" id="EMD-11302"/>
<dbReference type="EMDB" id="EMD-11310"/>
<dbReference type="EMDB" id="EMD-11320"/>
<dbReference type="EMDB" id="EMD-11322"/>
<dbReference type="EMDB" id="EMD-11325"/>
<dbReference type="EMDB" id="EMD-11335"/>
<dbReference type="EMDB" id="EMD-11440"/>
<dbReference type="EMDB" id="EMD-11441"/>
<dbReference type="EMDB" id="EMD-11456"/>
<dbReference type="EMDB" id="EMD-11458"/>
<dbReference type="EMDB" id="EMD-11517"/>
<dbReference type="EMDB" id="EMD-11518"/>
<dbReference type="EMDB" id="EMD-11519"/>
<dbReference type="EMDB" id="EMD-11520"/>
<dbReference type="EMDB" id="EMD-11521"/>
<dbReference type="EMDB" id="EMD-11602"/>
<dbReference type="EMDB" id="EMD-14113"/>
<dbReference type="EMDB" id="EMD-14114"/>
<dbReference type="EMDB" id="EMD-14317"/>
<dbReference type="EMDB" id="EMD-17297"/>
<dbReference type="EMDB" id="EMD-17696"/>
<dbReference type="EMDB" id="EMD-17697"/>
<dbReference type="EMDB" id="EMD-17698"/>
<dbReference type="EMDB" id="EMD-17699"/>
<dbReference type="EMDB" id="EMD-17700"/>
<dbReference type="EMDB" id="EMD-17701"/>
<dbReference type="EMDB" id="EMD-17804"/>
<dbReference type="EMDB" id="EMD-17805"/>
<dbReference type="EMDB" id="EMD-18539"/>
<dbReference type="EMDB" id="EMD-22681"/>
<dbReference type="EMDB" id="EMD-23936"/>
<dbReference type="EMDB" id="EMD-23937"/>
<dbReference type="EMDB" id="EMD-23938"/>
<dbReference type="EMDB" id="EMD-26067"/>
<dbReference type="EMDB" id="EMD-29757"/>
<dbReference type="EMDB" id="EMD-29758"/>
<dbReference type="EMDB" id="EMD-29759"/>
<dbReference type="EMDB" id="EMD-29760"/>
<dbReference type="EMDB" id="EMD-29771"/>
<dbReference type="EMDB" id="EMD-32800"/>
<dbReference type="EMDB" id="EMD-32801"/>
<dbReference type="EMDB" id="EMD-32802"/>
<dbReference type="EMDB" id="EMD-32803"/>
<dbReference type="EMDB" id="EMD-32804"/>
<dbReference type="EMDB" id="EMD-32806"/>
<dbReference type="EMDB" id="EMD-32807"/>
<dbReference type="EMDB" id="EMD-33329"/>
<dbReference type="EMDB" id="EMD-33330"/>
<dbReference type="EMDB" id="EMD-35413"/>
<dbReference type="EMDB" id="EMD-35414"/>
<dbReference type="EMDB" id="EMD-36178"/>
<dbReference type="EMDB" id="EMD-36179"/>
<dbReference type="EMDB" id="EMD-36180"/>
<dbReference type="EMDB" id="EMD-36181"/>
<dbReference type="EMDB" id="EMD-36838"/>
<dbReference type="EMDB" id="EMD-3770"/>
<dbReference type="EMDB" id="EMD-38548"/>
<dbReference type="EMDB" id="EMD-38549"/>
<dbReference type="EMDB" id="EMD-38629"/>
<dbReference type="EMDB" id="EMD-38630"/>
<dbReference type="EMDB" id="EMD-38631"/>
<dbReference type="EMDB" id="EMD-38752"/>
<dbReference type="EMDB" id="EMD-38753"/>
<dbReference type="EMDB" id="EMD-38754"/>
<dbReference type="EMDB" id="EMD-3883"/>
<dbReference type="EMDB" id="EMD-39455"/>
<dbReference type="EMDB" id="EMD-39456"/>
<dbReference type="EMDB" id="EMD-39956"/>
<dbReference type="EMDB" id="EMD-39957"/>
<dbReference type="EMDB" id="EMD-39958"/>
<dbReference type="EMDB" id="EMD-40205"/>
<dbReference type="EMDB" id="EMD-4070"/>
<dbReference type="EMDB" id="EMD-41039"/>
<dbReference type="EMDB" id="EMD-42351"/>
<dbReference type="EMDB" id="EMD-4242"/>
<dbReference type="EMDB" id="EMD-4337"/>
<dbReference type="EMDB" id="EMD-4348"/>
<dbReference type="EMDB" id="EMD-4349"/>
<dbReference type="EMDB" id="EMD-4350"/>
<dbReference type="EMDB" id="EMD-4351"/>
<dbReference type="EMDB" id="EMD-4352"/>
<dbReference type="EMDB" id="EMD-4353"/>
<dbReference type="EMDB" id="EMD-44641"/>
<dbReference type="EMDB" id="EMD-44671"/>
<dbReference type="EMDB" id="EMD-45170"/>
<dbReference type="EMDB" id="EMD-51132"/>
<dbReference type="EMDB" id="EMD-51134"/>
<dbReference type="EMDB" id="EMD-9701"/>
<dbReference type="EMDB" id="EMD-9702"/>
<dbReference type="EMDB" id="EMD-9703"/>
<dbReference type="SMR" id="P62249"/>
<dbReference type="BioGRID" id="112131">
    <property type="interactions" value="757"/>
</dbReference>
<dbReference type="ComplexPortal" id="CPX-5223">
    <property type="entry name" value="40S cytosolic small ribosomal subunit"/>
</dbReference>
<dbReference type="CORUM" id="P62249"/>
<dbReference type="DIP" id="DIP-33200N"/>
<dbReference type="FunCoup" id="P62249">
    <property type="interactions" value="1622"/>
</dbReference>
<dbReference type="IntAct" id="P62249">
    <property type="interactions" value="507"/>
</dbReference>
<dbReference type="MINT" id="P62249"/>
<dbReference type="STRING" id="9606.ENSP00000367806"/>
<dbReference type="GlyCosmos" id="P62249">
    <property type="glycosylation" value="1 site, 2 glycans"/>
</dbReference>
<dbReference type="GlyGen" id="P62249">
    <property type="glycosylation" value="1 site, 2 O-linked glycans (1 site)"/>
</dbReference>
<dbReference type="iPTMnet" id="P62249"/>
<dbReference type="MetOSite" id="P62249"/>
<dbReference type="PhosphoSitePlus" id="P62249"/>
<dbReference type="SwissPalm" id="P62249"/>
<dbReference type="BioMuta" id="RPS16"/>
<dbReference type="DMDM" id="50403607"/>
<dbReference type="jPOST" id="P62249"/>
<dbReference type="MassIVE" id="P62249"/>
<dbReference type="PaxDb" id="9606-ENSP00000251453"/>
<dbReference type="PeptideAtlas" id="P62249"/>
<dbReference type="ProteomicsDB" id="57374"/>
<dbReference type="Pumba" id="P62249"/>
<dbReference type="TopDownProteomics" id="P62249"/>
<dbReference type="Antibodypedia" id="30342">
    <property type="antibodies" value="204 antibodies from 25 providers"/>
</dbReference>
<dbReference type="DNASU" id="6217"/>
<dbReference type="Ensembl" id="ENST00000251453.8">
    <property type="protein sequence ID" value="ENSP00000251453.2"/>
    <property type="gene ID" value="ENSG00000105193.9"/>
</dbReference>
<dbReference type="GeneID" id="6217"/>
<dbReference type="KEGG" id="hsa:6217"/>
<dbReference type="MANE-Select" id="ENST00000251453.8">
    <property type="protein sequence ID" value="ENSP00000251453.2"/>
    <property type="RefSeq nucleotide sequence ID" value="NM_001020.6"/>
    <property type="RefSeq protein sequence ID" value="NP_001011.1"/>
</dbReference>
<dbReference type="UCSC" id="uc002olk.4">
    <property type="organism name" value="human"/>
</dbReference>
<dbReference type="AGR" id="HGNC:10396"/>
<dbReference type="CTD" id="6217"/>
<dbReference type="DisGeNET" id="6217"/>
<dbReference type="GeneCards" id="RPS16"/>
<dbReference type="HGNC" id="HGNC:10396">
    <property type="gene designation" value="RPS16"/>
</dbReference>
<dbReference type="HPA" id="ENSG00000105193">
    <property type="expression patterns" value="Low tissue specificity"/>
</dbReference>
<dbReference type="MIM" id="603675">
    <property type="type" value="gene"/>
</dbReference>
<dbReference type="neXtProt" id="NX_P62249"/>
<dbReference type="OpenTargets" id="ENSG00000105193"/>
<dbReference type="PharmGKB" id="PA34796"/>
<dbReference type="VEuPathDB" id="HostDB:ENSG00000105193"/>
<dbReference type="eggNOG" id="KOG1753">
    <property type="taxonomic scope" value="Eukaryota"/>
</dbReference>
<dbReference type="GeneTree" id="ENSGT00390000013067"/>
<dbReference type="InParanoid" id="P62249"/>
<dbReference type="OMA" id="WPIEMAR"/>
<dbReference type="OrthoDB" id="426865at2759"/>
<dbReference type="PAN-GO" id="P62249">
    <property type="GO annotations" value="4 GO annotations based on evolutionary models"/>
</dbReference>
<dbReference type="PhylomeDB" id="P62249"/>
<dbReference type="TreeFam" id="TF300088"/>
<dbReference type="PathwayCommons" id="P62249"/>
<dbReference type="Reactome" id="R-HSA-156827">
    <property type="pathway name" value="L13a-mediated translational silencing of Ceruloplasmin expression"/>
</dbReference>
<dbReference type="Reactome" id="R-HSA-156902">
    <property type="pathway name" value="Peptide chain elongation"/>
</dbReference>
<dbReference type="Reactome" id="R-HSA-1799339">
    <property type="pathway name" value="SRP-dependent cotranslational protein targeting to membrane"/>
</dbReference>
<dbReference type="Reactome" id="R-HSA-192823">
    <property type="pathway name" value="Viral mRNA Translation"/>
</dbReference>
<dbReference type="Reactome" id="R-HSA-2408557">
    <property type="pathway name" value="Selenocysteine synthesis"/>
</dbReference>
<dbReference type="Reactome" id="R-HSA-6791226">
    <property type="pathway name" value="Major pathway of rRNA processing in the nucleolus and cytosol"/>
</dbReference>
<dbReference type="Reactome" id="R-HSA-72649">
    <property type="pathway name" value="Translation initiation complex formation"/>
</dbReference>
<dbReference type="Reactome" id="R-HSA-72689">
    <property type="pathway name" value="Formation of a pool of free 40S subunits"/>
</dbReference>
<dbReference type="Reactome" id="R-HSA-72695">
    <property type="pathway name" value="Formation of the ternary complex, and subsequently, the 43S complex"/>
</dbReference>
<dbReference type="Reactome" id="R-HSA-72702">
    <property type="pathway name" value="Ribosomal scanning and start codon recognition"/>
</dbReference>
<dbReference type="Reactome" id="R-HSA-72706">
    <property type="pathway name" value="GTP hydrolysis and joining of the 60S ribosomal subunit"/>
</dbReference>
<dbReference type="Reactome" id="R-HSA-72764">
    <property type="pathway name" value="Eukaryotic Translation Termination"/>
</dbReference>
<dbReference type="Reactome" id="R-HSA-9010553">
    <property type="pathway name" value="Regulation of expression of SLITs and ROBOs"/>
</dbReference>
<dbReference type="Reactome" id="R-HSA-9633012">
    <property type="pathway name" value="Response of EIF2AK4 (GCN2) to amino acid deficiency"/>
</dbReference>
<dbReference type="Reactome" id="R-HSA-9735869">
    <property type="pathway name" value="SARS-CoV-1 modulates host translation machinery"/>
</dbReference>
<dbReference type="Reactome" id="R-HSA-9754678">
    <property type="pathway name" value="SARS-CoV-2 modulates host translation machinery"/>
</dbReference>
<dbReference type="Reactome" id="R-HSA-975956">
    <property type="pathway name" value="Nonsense Mediated Decay (NMD) independent of the Exon Junction Complex (EJC)"/>
</dbReference>
<dbReference type="Reactome" id="R-HSA-975957">
    <property type="pathway name" value="Nonsense Mediated Decay (NMD) enhanced by the Exon Junction Complex (EJC)"/>
</dbReference>
<dbReference type="SignaLink" id="P62249"/>
<dbReference type="SIGNOR" id="P62249"/>
<dbReference type="BioGRID-ORCS" id="6217">
    <property type="hits" value="819 hits in 1175 CRISPR screens"/>
</dbReference>
<dbReference type="CD-CODE" id="232F8A39">
    <property type="entry name" value="P-body"/>
</dbReference>
<dbReference type="CD-CODE" id="91857CE7">
    <property type="entry name" value="Nucleolus"/>
</dbReference>
<dbReference type="CD-CODE" id="FB4E32DD">
    <property type="entry name" value="Presynaptic clusters and postsynaptic densities"/>
</dbReference>
<dbReference type="ChiTaRS" id="RPS16">
    <property type="organism name" value="human"/>
</dbReference>
<dbReference type="EvolutionaryTrace" id="P62249"/>
<dbReference type="GeneWiki" id="RPS16"/>
<dbReference type="GenomeRNAi" id="6217"/>
<dbReference type="Pharos" id="P62249">
    <property type="development level" value="Tbio"/>
</dbReference>
<dbReference type="PRO" id="PR:P62249"/>
<dbReference type="Proteomes" id="UP000005640">
    <property type="component" value="Chromosome 19"/>
</dbReference>
<dbReference type="RNAct" id="P62249">
    <property type="molecule type" value="protein"/>
</dbReference>
<dbReference type="Bgee" id="ENSG00000105193">
    <property type="expression patterns" value="Expressed in adult organism and 215 other cell types or tissues"/>
</dbReference>
<dbReference type="ExpressionAtlas" id="P62249">
    <property type="expression patterns" value="baseline and differential"/>
</dbReference>
<dbReference type="GO" id="GO:0005737">
    <property type="term" value="C:cytoplasm"/>
    <property type="evidence" value="ECO:0000303"/>
    <property type="project" value="ComplexPortal"/>
</dbReference>
<dbReference type="GO" id="GO:0005829">
    <property type="term" value="C:cytosol"/>
    <property type="evidence" value="ECO:0000304"/>
    <property type="project" value="Reactome"/>
</dbReference>
<dbReference type="GO" id="GO:0022626">
    <property type="term" value="C:cytosolic ribosome"/>
    <property type="evidence" value="ECO:0000314"/>
    <property type="project" value="FlyBase"/>
</dbReference>
<dbReference type="GO" id="GO:0022627">
    <property type="term" value="C:cytosolic small ribosomal subunit"/>
    <property type="evidence" value="ECO:0000314"/>
    <property type="project" value="UniProtKB"/>
</dbReference>
<dbReference type="GO" id="GO:0070062">
    <property type="term" value="C:extracellular exosome"/>
    <property type="evidence" value="ECO:0007005"/>
    <property type="project" value="UniProtKB"/>
</dbReference>
<dbReference type="GO" id="GO:0005925">
    <property type="term" value="C:focal adhesion"/>
    <property type="evidence" value="ECO:0007005"/>
    <property type="project" value="UniProtKB"/>
</dbReference>
<dbReference type="GO" id="GO:0016020">
    <property type="term" value="C:membrane"/>
    <property type="evidence" value="ECO:0007005"/>
    <property type="project" value="UniProtKB"/>
</dbReference>
<dbReference type="GO" id="GO:0005730">
    <property type="term" value="C:nucleolus"/>
    <property type="evidence" value="ECO:0007669"/>
    <property type="project" value="UniProtKB-SubCell"/>
</dbReference>
<dbReference type="GO" id="GO:0005654">
    <property type="term" value="C:nucleoplasm"/>
    <property type="evidence" value="ECO:0000304"/>
    <property type="project" value="Reactome"/>
</dbReference>
<dbReference type="GO" id="GO:0015935">
    <property type="term" value="C:small ribosomal subunit"/>
    <property type="evidence" value="ECO:0007005"/>
    <property type="project" value="UniProtKB"/>
</dbReference>
<dbReference type="GO" id="GO:0032040">
    <property type="term" value="C:small-subunit processome"/>
    <property type="evidence" value="ECO:0000314"/>
    <property type="project" value="UniProtKB"/>
</dbReference>
<dbReference type="GO" id="GO:0045202">
    <property type="term" value="C:synapse"/>
    <property type="evidence" value="ECO:0007669"/>
    <property type="project" value="Ensembl"/>
</dbReference>
<dbReference type="GO" id="GO:0003723">
    <property type="term" value="F:RNA binding"/>
    <property type="evidence" value="ECO:0000314"/>
    <property type="project" value="UniProtKB"/>
</dbReference>
<dbReference type="GO" id="GO:0003735">
    <property type="term" value="F:structural constituent of ribosome"/>
    <property type="evidence" value="ECO:0000314"/>
    <property type="project" value="FlyBase"/>
</dbReference>
<dbReference type="GO" id="GO:1990830">
    <property type="term" value="P:cellular response to leukemia inhibitory factor"/>
    <property type="evidence" value="ECO:0007669"/>
    <property type="project" value="Ensembl"/>
</dbReference>
<dbReference type="GO" id="GO:0002181">
    <property type="term" value="P:cytoplasmic translation"/>
    <property type="evidence" value="ECO:0000303"/>
    <property type="project" value="ComplexPortal"/>
</dbReference>
<dbReference type="GO" id="GO:0000462">
    <property type="term" value="P:maturation of SSU-rRNA from tricistronic rRNA transcript (SSU-rRNA, 5.8S rRNA, LSU-rRNA)"/>
    <property type="evidence" value="ECO:0000318"/>
    <property type="project" value="GO_Central"/>
</dbReference>
<dbReference type="GO" id="GO:0042274">
    <property type="term" value="P:ribosomal small subunit biogenesis"/>
    <property type="evidence" value="ECO:0000314"/>
    <property type="project" value="UniProtKB"/>
</dbReference>
<dbReference type="GO" id="GO:0006364">
    <property type="term" value="P:rRNA processing"/>
    <property type="evidence" value="ECO:0000315"/>
    <property type="project" value="UniProtKB"/>
</dbReference>
<dbReference type="GO" id="GO:0006412">
    <property type="term" value="P:translation"/>
    <property type="evidence" value="ECO:0000303"/>
    <property type="project" value="UniProtKB"/>
</dbReference>
<dbReference type="FunFam" id="3.30.230.10:FF:000184">
    <property type="entry name" value="40S ribosomal protein S16"/>
    <property type="match status" value="1"/>
</dbReference>
<dbReference type="Gene3D" id="3.30.230.10">
    <property type="match status" value="1"/>
</dbReference>
<dbReference type="InterPro" id="IPR020568">
    <property type="entry name" value="Ribosomal_Su5_D2-typ_SF"/>
</dbReference>
<dbReference type="InterPro" id="IPR000754">
    <property type="entry name" value="Ribosomal_uS9"/>
</dbReference>
<dbReference type="InterPro" id="IPR020574">
    <property type="entry name" value="Ribosomal_uS9_CS"/>
</dbReference>
<dbReference type="InterPro" id="IPR014721">
    <property type="entry name" value="Ribsml_uS5_D2-typ_fold_subgr"/>
</dbReference>
<dbReference type="PANTHER" id="PTHR21569:SF16">
    <property type="entry name" value="RIBOSOMAL PROTEIN S16"/>
    <property type="match status" value="1"/>
</dbReference>
<dbReference type="PANTHER" id="PTHR21569">
    <property type="entry name" value="RIBOSOMAL PROTEIN S9"/>
    <property type="match status" value="1"/>
</dbReference>
<dbReference type="Pfam" id="PF00380">
    <property type="entry name" value="Ribosomal_S9"/>
    <property type="match status" value="1"/>
</dbReference>
<dbReference type="SUPFAM" id="SSF54211">
    <property type="entry name" value="Ribosomal protein S5 domain 2-like"/>
    <property type="match status" value="1"/>
</dbReference>
<dbReference type="PROSITE" id="PS00360">
    <property type="entry name" value="RIBOSOMAL_S9"/>
    <property type="match status" value="1"/>
</dbReference>
<comment type="function">
    <text evidence="1 2">Component of the small ribosomal subunit (PubMed:23636399). The ribosome is a large ribonucleoprotein complex responsible for the synthesis of proteins in the cell (PubMed:23636399). Part of the small subunit (SSU) processome, first precursor of the small eukaryotic ribosomal subunit. During the assembly of the SSU processome in the nucleolus, many ribosome biogenesis factors, an RNA chaperone and ribosomal proteins associate with the nascent pre-rRNA and work in concert to generate RNA folding, modifications, rearrangements and cleavage as well as targeted degradation of pre-ribosomal RNA by the RNA exosome (PubMed:34516797).</text>
</comment>
<comment type="subunit">
    <text evidence="1 2">Component of the small ribosomal subunit. Part of the small subunit (SSU) processome, composed of more than 70 proteins and the RNA chaperone small nucleolar RNA (snoRNA) U3 (PubMed:34516797).</text>
</comment>
<comment type="interaction">
    <interactant intactId="EBI-352480">
        <id>P62249</id>
    </interactant>
    <interactant intactId="EBI-5323863">
        <id>Q5S007</id>
        <label>LRRK2</label>
    </interactant>
    <organismsDiffer>false</organismsDiffer>
    <experiments>4</experiments>
</comment>
<comment type="interaction">
    <interactant intactId="EBI-352480">
        <id>P62249</id>
    </interactant>
    <interactant intactId="EBI-354451">
        <id>P39019</id>
        <label>RPS19</label>
    </interactant>
    <organismsDiffer>false</organismsDiffer>
    <experiments>4</experiments>
</comment>
<comment type="subcellular location">
    <subcellularLocation>
        <location evidence="1">Cytoplasm</location>
    </subcellularLocation>
    <subcellularLocation>
        <location evidence="2">Nucleus</location>
        <location evidence="2">Nucleolus</location>
    </subcellularLocation>
</comment>
<comment type="similarity">
    <text evidence="6">Belongs to the universal ribosomal protein uS9 family.</text>
</comment>